<dbReference type="EC" id="2.1.1.77" evidence="2"/>
<dbReference type="EMBL" id="CR859129">
    <property type="protein sequence ID" value="CAH91321.1"/>
    <property type="status" value="ALT_INIT"/>
    <property type="molecule type" value="mRNA"/>
</dbReference>
<dbReference type="RefSeq" id="NP_001125781.1">
    <property type="nucleotide sequence ID" value="NM_001132309.1"/>
</dbReference>
<dbReference type="SMR" id="Q5RA89"/>
<dbReference type="FunCoup" id="Q5RA89">
    <property type="interactions" value="1306"/>
</dbReference>
<dbReference type="STRING" id="9601.ENSPPYP00000019138"/>
<dbReference type="GeneID" id="100172708"/>
<dbReference type="KEGG" id="pon:100172708"/>
<dbReference type="CTD" id="5110"/>
<dbReference type="eggNOG" id="KOG1661">
    <property type="taxonomic scope" value="Eukaryota"/>
</dbReference>
<dbReference type="InParanoid" id="Q5RA89"/>
<dbReference type="OrthoDB" id="73890at2759"/>
<dbReference type="Proteomes" id="UP000001595">
    <property type="component" value="Unplaced"/>
</dbReference>
<dbReference type="GO" id="GO:0005829">
    <property type="term" value="C:cytosol"/>
    <property type="evidence" value="ECO:0007669"/>
    <property type="project" value="UniProtKB-SubCell"/>
</dbReference>
<dbReference type="GO" id="GO:0004719">
    <property type="term" value="F:protein-L-isoaspartate (D-aspartate) O-methyltransferase activity"/>
    <property type="evidence" value="ECO:0000250"/>
    <property type="project" value="UniProtKB"/>
</dbReference>
<dbReference type="GO" id="GO:0006479">
    <property type="term" value="P:protein methylation"/>
    <property type="evidence" value="ECO:0000250"/>
    <property type="project" value="UniProtKB"/>
</dbReference>
<dbReference type="CDD" id="cd02440">
    <property type="entry name" value="AdoMet_MTases"/>
    <property type="match status" value="1"/>
</dbReference>
<dbReference type="FunFam" id="3.40.50.150:FF:000027">
    <property type="entry name" value="Protein-L-isoaspartate O-methyltransferase"/>
    <property type="match status" value="1"/>
</dbReference>
<dbReference type="Gene3D" id="3.40.50.150">
    <property type="entry name" value="Vaccinia Virus protein VP39"/>
    <property type="match status" value="1"/>
</dbReference>
<dbReference type="InterPro" id="IPR000682">
    <property type="entry name" value="PCMT"/>
</dbReference>
<dbReference type="InterPro" id="IPR029063">
    <property type="entry name" value="SAM-dependent_MTases_sf"/>
</dbReference>
<dbReference type="NCBIfam" id="TIGR00080">
    <property type="entry name" value="pimt"/>
    <property type="match status" value="1"/>
</dbReference>
<dbReference type="PANTHER" id="PTHR11579">
    <property type="entry name" value="PROTEIN-L-ISOASPARTATE O-METHYLTRANSFERASE"/>
    <property type="match status" value="1"/>
</dbReference>
<dbReference type="PANTHER" id="PTHR11579:SF7">
    <property type="entry name" value="PROTEIN-L-ISOASPARTATE(D-ASPARTATE) O-METHYLTRANSFERASE"/>
    <property type="match status" value="1"/>
</dbReference>
<dbReference type="Pfam" id="PF01135">
    <property type="entry name" value="PCMT"/>
    <property type="match status" value="1"/>
</dbReference>
<dbReference type="SUPFAM" id="SSF53335">
    <property type="entry name" value="S-adenosyl-L-methionine-dependent methyltransferases"/>
    <property type="match status" value="1"/>
</dbReference>
<dbReference type="PROSITE" id="PS01279">
    <property type="entry name" value="PCMT"/>
    <property type="match status" value="1"/>
</dbReference>
<comment type="function">
    <text evidence="2">Initiates the repair of damaged proteins by catalyzing methyl esterification of L-isoaspartyl and D-aspartyl residues produced by spontaneous isomerization and racemization of L-aspartyl and L-asparaginyl residues in aging peptides and proteins (By similarity). Acts on EIF4EBP2, microtubule-associated protein 2, calreticulin, clathrin light chains a and b, Ubiquitin C-terminal hydrolase isozyme L1, phosphatidylethanolamine-binding protein 1, stathmin, beta-synuclein and alpha-synuclein (By similarity).</text>
</comment>
<comment type="catalytic activity">
    <reaction evidence="2">
        <text>[protein]-L-isoaspartate + S-adenosyl-L-methionine = [protein]-L-isoaspartate alpha-methyl ester + S-adenosyl-L-homocysteine</text>
        <dbReference type="Rhea" id="RHEA:12705"/>
        <dbReference type="Rhea" id="RHEA-COMP:12143"/>
        <dbReference type="Rhea" id="RHEA-COMP:12144"/>
        <dbReference type="ChEBI" id="CHEBI:57856"/>
        <dbReference type="ChEBI" id="CHEBI:59789"/>
        <dbReference type="ChEBI" id="CHEBI:90596"/>
        <dbReference type="ChEBI" id="CHEBI:90598"/>
        <dbReference type="EC" id="2.1.1.77"/>
    </reaction>
    <physiologicalReaction direction="left-to-right" evidence="2">
        <dbReference type="Rhea" id="RHEA:12706"/>
    </physiologicalReaction>
</comment>
<comment type="subunit">
    <text evidence="1">Monomer.</text>
</comment>
<comment type="subcellular location">
    <subcellularLocation>
        <location evidence="1">Cytoplasm</location>
        <location evidence="1">Cytosol</location>
    </subcellularLocation>
</comment>
<comment type="similarity">
    <text evidence="4">Belongs to the methyltransferase superfamily. L-isoaspartyl/D-aspartyl protein methyltransferase family.</text>
</comment>
<comment type="sequence caution" evidence="4">
    <conflict type="erroneous initiation">
        <sequence resource="EMBL-CDS" id="CAH91321"/>
    </conflict>
</comment>
<reference key="1">
    <citation type="submission" date="2004-11" db="EMBL/GenBank/DDBJ databases">
        <authorList>
            <consortium name="The German cDNA consortium"/>
        </authorList>
    </citation>
    <scope>NUCLEOTIDE SEQUENCE [LARGE SCALE MRNA]</scope>
    <source>
        <tissue>Brain cortex</tissue>
    </source>
</reference>
<organism>
    <name type="scientific">Pongo abelii</name>
    <name type="common">Sumatran orangutan</name>
    <name type="synonym">Pongo pygmaeus abelii</name>
    <dbReference type="NCBI Taxonomy" id="9601"/>
    <lineage>
        <taxon>Eukaryota</taxon>
        <taxon>Metazoa</taxon>
        <taxon>Chordata</taxon>
        <taxon>Craniata</taxon>
        <taxon>Vertebrata</taxon>
        <taxon>Euteleostomi</taxon>
        <taxon>Mammalia</taxon>
        <taxon>Eutheria</taxon>
        <taxon>Euarchontoglires</taxon>
        <taxon>Primates</taxon>
        <taxon>Haplorrhini</taxon>
        <taxon>Catarrhini</taxon>
        <taxon>Hominidae</taxon>
        <taxon>Pongo</taxon>
    </lineage>
</organism>
<protein>
    <recommendedName>
        <fullName evidence="2">Protein-L-isoaspartate(D-aspartate) O-methyltransferase</fullName>
        <shortName>PIMT</shortName>
        <ecNumber evidence="2">2.1.1.77</ecNumber>
    </recommendedName>
    <alternativeName>
        <fullName>L-isoaspartyl protein carboxyl methyltransferase</fullName>
    </alternativeName>
    <alternativeName>
        <fullName>Protein L-isoaspartyl/D-aspartyl methyltransferase</fullName>
    </alternativeName>
    <alternativeName>
        <fullName>Protein-beta-aspartate methyltransferase</fullName>
    </alternativeName>
</protein>
<keyword id="KW-0963">Cytoplasm</keyword>
<keyword id="KW-0489">Methyltransferase</keyword>
<keyword id="KW-1185">Reference proteome</keyword>
<keyword id="KW-0949">S-adenosyl-L-methionine</keyword>
<keyword id="KW-0808">Transferase</keyword>
<feature type="chain" id="PRO_0000253634" description="Protein-L-isoaspartate(D-aspartate) O-methyltransferase">
    <location>
        <begin position="1"/>
        <end position="227"/>
    </location>
</feature>
<feature type="active site" evidence="3">
    <location>
        <position position="60"/>
    </location>
</feature>
<feature type="binding site" evidence="1">
    <location>
        <begin position="57"/>
        <end position="60"/>
    </location>
    <ligand>
        <name>S-adenosyl-L-homocysteine</name>
        <dbReference type="ChEBI" id="CHEBI:57856"/>
    </ligand>
</feature>
<feature type="binding site" evidence="1">
    <location>
        <position position="65"/>
    </location>
    <ligand>
        <name>S-adenosyl-L-homocysteine</name>
        <dbReference type="ChEBI" id="CHEBI:57856"/>
    </ligand>
</feature>
<feature type="binding site" evidence="1">
    <location>
        <position position="89"/>
    </location>
    <ligand>
        <name>S-adenosyl-L-homocysteine</name>
        <dbReference type="ChEBI" id="CHEBI:57856"/>
    </ligand>
</feature>
<feature type="binding site" evidence="1">
    <location>
        <begin position="110"/>
        <end position="111"/>
    </location>
    <ligand>
        <name>S-adenosyl-L-homocysteine</name>
        <dbReference type="ChEBI" id="CHEBI:57856"/>
    </ligand>
</feature>
<feature type="binding site" evidence="1">
    <location>
        <begin position="142"/>
        <end position="143"/>
    </location>
    <ligand>
        <name>S-adenosyl-L-homocysteine</name>
        <dbReference type="ChEBI" id="CHEBI:57856"/>
    </ligand>
</feature>
<feature type="binding site" evidence="1">
    <location>
        <position position="217"/>
    </location>
    <ligand>
        <name>S-adenosyl-L-homocysteine</name>
        <dbReference type="ChEBI" id="CHEBI:57856"/>
    </ligand>
</feature>
<feature type="binding site" evidence="1">
    <location>
        <position position="222"/>
    </location>
    <ligand>
        <name>S-adenosyl-L-homocysteine</name>
        <dbReference type="ChEBI" id="CHEBI:57856"/>
    </ligand>
</feature>
<sequence>MGWKSGGASHSELIHNLRKNGIIKTDKVFEVMLATDRSHYAKCNPYMDSPQSIGFQATISAPHMHAYALELLFDQLHEGAKALDVGSGSGILTACFARMVGCTGKVIGIDHIKELVDDSINNVRKDDPTLLSSGRVQLVVGDGRMGYAEEAPYDAIHVGAAAPVVPQALIDQLKPGGRLILPVGPAGGNQMLEQYDKLQDGSVKMKPLMGVIYVPLTDKEKQWSRWK</sequence>
<name>PIMT_PONAB</name>
<gene>
    <name type="primary">PCMT1</name>
</gene>
<evidence type="ECO:0000250" key="1">
    <source>
        <dbReference type="UniProtKB" id="P22061"/>
    </source>
</evidence>
<evidence type="ECO:0000250" key="2">
    <source>
        <dbReference type="UniProtKB" id="P23506"/>
    </source>
</evidence>
<evidence type="ECO:0000250" key="3">
    <source>
        <dbReference type="UniProtKB" id="Q27869"/>
    </source>
</evidence>
<evidence type="ECO:0000305" key="4"/>
<accession>Q5RA89</accession>
<proteinExistence type="evidence at transcript level"/>